<keyword id="KW-0472">Membrane</keyword>
<keyword id="KW-1185">Reference proteome</keyword>
<keyword id="KW-0812">Transmembrane</keyword>
<keyword id="KW-1133">Transmembrane helix</keyword>
<protein>
    <recommendedName>
        <fullName>Altered inheritance of mitochondria protein 11</fullName>
    </recommendedName>
</protein>
<accession>Q6BYM1</accession>
<evidence type="ECO:0000255" key="1"/>
<evidence type="ECO:0000305" key="2"/>
<gene>
    <name type="primary">AIM11</name>
    <name type="ordered locus">DEHA2A08514g</name>
</gene>
<comment type="subcellular location">
    <subcellularLocation>
        <location evidence="2">Membrane</location>
        <topology evidence="2">Multi-pass membrane protein</topology>
    </subcellularLocation>
</comment>
<comment type="similarity">
    <text evidence="2">Belongs to the AIM11 family.</text>
</comment>
<organism>
    <name type="scientific">Debaryomyces hansenii (strain ATCC 36239 / CBS 767 / BCRC 21394 / JCM 1990 / NBRC 0083 / IGC 2968)</name>
    <name type="common">Yeast</name>
    <name type="synonym">Torulaspora hansenii</name>
    <dbReference type="NCBI Taxonomy" id="284592"/>
    <lineage>
        <taxon>Eukaryota</taxon>
        <taxon>Fungi</taxon>
        <taxon>Dikarya</taxon>
        <taxon>Ascomycota</taxon>
        <taxon>Saccharomycotina</taxon>
        <taxon>Pichiomycetes</taxon>
        <taxon>Debaryomycetaceae</taxon>
        <taxon>Debaryomyces</taxon>
    </lineage>
</organism>
<name>AIM11_DEBHA</name>
<feature type="chain" id="PRO_0000405647" description="Altered inheritance of mitochondria protein 11">
    <location>
        <begin position="1"/>
        <end position="166"/>
    </location>
</feature>
<feature type="transmembrane region" description="Helical" evidence="1">
    <location>
        <begin position="35"/>
        <end position="52"/>
    </location>
</feature>
<feature type="transmembrane region" description="Helical" evidence="1">
    <location>
        <begin position="81"/>
        <end position="103"/>
    </location>
</feature>
<proteinExistence type="inferred from homology"/>
<reference key="1">
    <citation type="journal article" date="2004" name="Nature">
        <title>Genome evolution in yeasts.</title>
        <authorList>
            <person name="Dujon B."/>
            <person name="Sherman D."/>
            <person name="Fischer G."/>
            <person name="Durrens P."/>
            <person name="Casaregola S."/>
            <person name="Lafontaine I."/>
            <person name="de Montigny J."/>
            <person name="Marck C."/>
            <person name="Neuveglise C."/>
            <person name="Talla E."/>
            <person name="Goffard N."/>
            <person name="Frangeul L."/>
            <person name="Aigle M."/>
            <person name="Anthouard V."/>
            <person name="Babour A."/>
            <person name="Barbe V."/>
            <person name="Barnay S."/>
            <person name="Blanchin S."/>
            <person name="Beckerich J.-M."/>
            <person name="Beyne E."/>
            <person name="Bleykasten C."/>
            <person name="Boisrame A."/>
            <person name="Boyer J."/>
            <person name="Cattolico L."/>
            <person name="Confanioleri F."/>
            <person name="de Daruvar A."/>
            <person name="Despons L."/>
            <person name="Fabre E."/>
            <person name="Fairhead C."/>
            <person name="Ferry-Dumazet H."/>
            <person name="Groppi A."/>
            <person name="Hantraye F."/>
            <person name="Hennequin C."/>
            <person name="Jauniaux N."/>
            <person name="Joyet P."/>
            <person name="Kachouri R."/>
            <person name="Kerrest A."/>
            <person name="Koszul R."/>
            <person name="Lemaire M."/>
            <person name="Lesur I."/>
            <person name="Ma L."/>
            <person name="Muller H."/>
            <person name="Nicaud J.-M."/>
            <person name="Nikolski M."/>
            <person name="Oztas S."/>
            <person name="Ozier-Kalogeropoulos O."/>
            <person name="Pellenz S."/>
            <person name="Potier S."/>
            <person name="Richard G.-F."/>
            <person name="Straub M.-L."/>
            <person name="Suleau A."/>
            <person name="Swennen D."/>
            <person name="Tekaia F."/>
            <person name="Wesolowski-Louvel M."/>
            <person name="Westhof E."/>
            <person name="Wirth B."/>
            <person name="Zeniou-Meyer M."/>
            <person name="Zivanovic Y."/>
            <person name="Bolotin-Fukuhara M."/>
            <person name="Thierry A."/>
            <person name="Bouchier C."/>
            <person name="Caudron B."/>
            <person name="Scarpelli C."/>
            <person name="Gaillardin C."/>
            <person name="Weissenbach J."/>
            <person name="Wincker P."/>
            <person name="Souciet J.-L."/>
        </authorList>
    </citation>
    <scope>NUCLEOTIDE SEQUENCE [LARGE SCALE GENOMIC DNA]</scope>
    <source>
        <strain>ATCC 36239 / CBS 767 / BCRC 21394 / JCM 1990 / NBRC 0083 / IGC 2968</strain>
    </source>
</reference>
<sequence length="166" mass="18682">MSAEPSQFNKLLTKYDFKLASASEEYRNRRKRQMMLFMGSAAITIFTSRLAYKSTITRQYVPSLFQGNHAPPLSYNFTSDAAVAVGTGTLLCGSVSSMVIFGTCWIIDVSNFQEFGWKMKSLMGGYEKQKELAKLPMDEESAFLQDSLNDILDGKYDFDETTPAEK</sequence>
<dbReference type="EMBL" id="CR382133">
    <property type="protein sequence ID" value="CAG84654.1"/>
    <property type="molecule type" value="Genomic_DNA"/>
</dbReference>
<dbReference type="RefSeq" id="XP_456698.1">
    <property type="nucleotide sequence ID" value="XM_456698.1"/>
</dbReference>
<dbReference type="FunCoup" id="Q6BYM1">
    <property type="interactions" value="27"/>
</dbReference>
<dbReference type="GeneID" id="2899676"/>
<dbReference type="KEGG" id="dha:DEHA2A08514g"/>
<dbReference type="VEuPathDB" id="FungiDB:DEHA2A08514g"/>
<dbReference type="eggNOG" id="ENOG502SAK0">
    <property type="taxonomic scope" value="Eukaryota"/>
</dbReference>
<dbReference type="HOGENOM" id="CLU_118700_0_0_1"/>
<dbReference type="InParanoid" id="Q6BYM1"/>
<dbReference type="OMA" id="RFAYKST"/>
<dbReference type="OrthoDB" id="4088121at2759"/>
<dbReference type="Proteomes" id="UP000000599">
    <property type="component" value="Chromosome A"/>
</dbReference>
<dbReference type="GO" id="GO:0016020">
    <property type="term" value="C:membrane"/>
    <property type="evidence" value="ECO:0007669"/>
    <property type="project" value="UniProtKB-SubCell"/>
</dbReference>
<dbReference type="GO" id="GO:0005739">
    <property type="term" value="C:mitochondrion"/>
    <property type="evidence" value="ECO:0007669"/>
    <property type="project" value="TreeGrafter"/>
</dbReference>
<dbReference type="InterPro" id="IPR038814">
    <property type="entry name" value="AIM11"/>
</dbReference>
<dbReference type="PANTHER" id="PTHR39136">
    <property type="entry name" value="ALTERED INHERITANCE OF MITOCHONDRIA PROTEIN 11"/>
    <property type="match status" value="1"/>
</dbReference>
<dbReference type="PANTHER" id="PTHR39136:SF1">
    <property type="entry name" value="ALTERED INHERITANCE OF MITOCHONDRIA PROTEIN 11"/>
    <property type="match status" value="1"/>
</dbReference>